<organism>
    <name type="scientific">Hyphomonas neptunium (strain ATCC 15444)</name>
    <dbReference type="NCBI Taxonomy" id="228405"/>
    <lineage>
        <taxon>Bacteria</taxon>
        <taxon>Pseudomonadati</taxon>
        <taxon>Pseudomonadota</taxon>
        <taxon>Alphaproteobacteria</taxon>
        <taxon>Hyphomonadales</taxon>
        <taxon>Hyphomonadaceae</taxon>
        <taxon>Hyphomonas</taxon>
    </lineage>
</organism>
<comment type="similarity">
    <text evidence="1">Belongs to the bacterial ribosomal protein bS16 family.</text>
</comment>
<proteinExistence type="inferred from homology"/>
<name>RS16_HYPNA</name>
<keyword id="KW-1185">Reference proteome</keyword>
<keyword id="KW-0687">Ribonucleoprotein</keyword>
<keyword id="KW-0689">Ribosomal protein</keyword>
<protein>
    <recommendedName>
        <fullName evidence="1">Small ribosomal subunit protein bS16</fullName>
    </recommendedName>
    <alternativeName>
        <fullName evidence="3">30S ribosomal protein S16</fullName>
    </alternativeName>
</protein>
<feature type="chain" id="PRO_1000049270" description="Small ribosomal subunit protein bS16">
    <location>
        <begin position="1"/>
        <end position="147"/>
    </location>
</feature>
<feature type="region of interest" description="Disordered" evidence="2">
    <location>
        <begin position="89"/>
        <end position="147"/>
    </location>
</feature>
<feature type="compositionally biased region" description="Basic and acidic residues" evidence="2">
    <location>
        <begin position="97"/>
        <end position="118"/>
    </location>
</feature>
<feature type="compositionally biased region" description="Low complexity" evidence="2">
    <location>
        <begin position="119"/>
        <end position="147"/>
    </location>
</feature>
<dbReference type="EMBL" id="CP000158">
    <property type="protein sequence ID" value="ABI77788.1"/>
    <property type="molecule type" value="Genomic_DNA"/>
</dbReference>
<dbReference type="RefSeq" id="WP_011645072.1">
    <property type="nucleotide sequence ID" value="NC_008358.1"/>
</dbReference>
<dbReference type="SMR" id="Q0C671"/>
<dbReference type="STRING" id="228405.HNE_0038"/>
<dbReference type="KEGG" id="hne:HNE_0038"/>
<dbReference type="eggNOG" id="COG0228">
    <property type="taxonomic scope" value="Bacteria"/>
</dbReference>
<dbReference type="HOGENOM" id="CLU_100590_3_0_5"/>
<dbReference type="Proteomes" id="UP000001959">
    <property type="component" value="Chromosome"/>
</dbReference>
<dbReference type="GO" id="GO:0005737">
    <property type="term" value="C:cytoplasm"/>
    <property type="evidence" value="ECO:0007669"/>
    <property type="project" value="UniProtKB-ARBA"/>
</dbReference>
<dbReference type="GO" id="GO:0015935">
    <property type="term" value="C:small ribosomal subunit"/>
    <property type="evidence" value="ECO:0007669"/>
    <property type="project" value="TreeGrafter"/>
</dbReference>
<dbReference type="GO" id="GO:0003735">
    <property type="term" value="F:structural constituent of ribosome"/>
    <property type="evidence" value="ECO:0007669"/>
    <property type="project" value="InterPro"/>
</dbReference>
<dbReference type="GO" id="GO:0006412">
    <property type="term" value="P:translation"/>
    <property type="evidence" value="ECO:0007669"/>
    <property type="project" value="UniProtKB-UniRule"/>
</dbReference>
<dbReference type="Gene3D" id="3.30.1320.10">
    <property type="match status" value="1"/>
</dbReference>
<dbReference type="HAMAP" id="MF_00385">
    <property type="entry name" value="Ribosomal_bS16"/>
    <property type="match status" value="1"/>
</dbReference>
<dbReference type="InterPro" id="IPR000307">
    <property type="entry name" value="Ribosomal_bS16"/>
</dbReference>
<dbReference type="InterPro" id="IPR023803">
    <property type="entry name" value="Ribosomal_bS16_dom_sf"/>
</dbReference>
<dbReference type="NCBIfam" id="TIGR00002">
    <property type="entry name" value="S16"/>
    <property type="match status" value="1"/>
</dbReference>
<dbReference type="PANTHER" id="PTHR12919">
    <property type="entry name" value="30S RIBOSOMAL PROTEIN S16"/>
    <property type="match status" value="1"/>
</dbReference>
<dbReference type="PANTHER" id="PTHR12919:SF20">
    <property type="entry name" value="SMALL RIBOSOMAL SUBUNIT PROTEIN BS16M"/>
    <property type="match status" value="1"/>
</dbReference>
<dbReference type="Pfam" id="PF00886">
    <property type="entry name" value="Ribosomal_S16"/>
    <property type="match status" value="1"/>
</dbReference>
<dbReference type="SUPFAM" id="SSF54565">
    <property type="entry name" value="Ribosomal protein S16"/>
    <property type="match status" value="1"/>
</dbReference>
<evidence type="ECO:0000255" key="1">
    <source>
        <dbReference type="HAMAP-Rule" id="MF_00385"/>
    </source>
</evidence>
<evidence type="ECO:0000256" key="2">
    <source>
        <dbReference type="SAM" id="MobiDB-lite"/>
    </source>
</evidence>
<evidence type="ECO:0000305" key="3"/>
<sequence length="147" mass="15722">MSLKIRLARGGSKKRPFYSIVVADARAPRDGRFIEKIGTYDPRLAKDSGDRVKVNAEKAAEWIKKGAQPTDRVARFLSKVEVDGKAVVAWTHGNNPKKAEPGKKAQERAKERADKAEAKAAAAAEAAAAPAEEAPAEAAPAEETSES</sequence>
<gene>
    <name evidence="1" type="primary">rpsP</name>
    <name type="ordered locus">HNE_0038</name>
</gene>
<reference key="1">
    <citation type="journal article" date="2006" name="J. Bacteriol.">
        <title>Comparative genomic evidence for a close relationship between the dimorphic prosthecate bacteria Hyphomonas neptunium and Caulobacter crescentus.</title>
        <authorList>
            <person name="Badger J.H."/>
            <person name="Hoover T.R."/>
            <person name="Brun Y.V."/>
            <person name="Weiner R.M."/>
            <person name="Laub M.T."/>
            <person name="Alexandre G."/>
            <person name="Mrazek J."/>
            <person name="Ren Q."/>
            <person name="Paulsen I.T."/>
            <person name="Nelson K.E."/>
            <person name="Khouri H.M."/>
            <person name="Radune D."/>
            <person name="Sosa J."/>
            <person name="Dodson R.J."/>
            <person name="Sullivan S.A."/>
            <person name="Rosovitz M.J."/>
            <person name="Madupu R."/>
            <person name="Brinkac L.M."/>
            <person name="Durkin A.S."/>
            <person name="Daugherty S.C."/>
            <person name="Kothari S.P."/>
            <person name="Giglio M.G."/>
            <person name="Zhou L."/>
            <person name="Haft D.H."/>
            <person name="Selengut J.D."/>
            <person name="Davidsen T.M."/>
            <person name="Yang Q."/>
            <person name="Zafar N."/>
            <person name="Ward N.L."/>
        </authorList>
    </citation>
    <scope>NUCLEOTIDE SEQUENCE [LARGE SCALE GENOMIC DNA]</scope>
    <source>
        <strain>ATCC 15444</strain>
    </source>
</reference>
<accession>Q0C671</accession>